<evidence type="ECO:0000250" key="1">
    <source>
        <dbReference type="UniProtKB" id="P20000"/>
    </source>
</evidence>
<evidence type="ECO:0000250" key="2">
    <source>
        <dbReference type="UniProtKB" id="Q56R04"/>
    </source>
</evidence>
<evidence type="ECO:0000255" key="3">
    <source>
        <dbReference type="PROSITE-ProRule" id="PRU10007"/>
    </source>
</evidence>
<evidence type="ECO:0000255" key="4">
    <source>
        <dbReference type="PROSITE-ProRule" id="PRU10008"/>
    </source>
</evidence>
<evidence type="ECO:0000269" key="5">
    <source>
    </source>
</evidence>
<evidence type="ECO:0000303" key="6">
    <source>
    </source>
</evidence>
<evidence type="ECO:0000305" key="7"/>
<comment type="function">
    <text evidence="5 7">Dehydrogenase that catalyzes the oxidation of several aminoaldehydes (PubMed:23408433). Metabolizes and detoxifies aldehyde products of polyamine degradation to non-toxic amino acids (Probable). Catalyzes the oxidation of 4-aminobutanal and 3-aminopropanal to 4-aminobutanoate and beta-alanine, respectively (PubMed:23408433). Catalyzes the oxidation of 4-(trimethylamino)butanal and 4-guanidinobutanal to 4-trimethylammoniobutanoate and 4-guanidinobutanoate, respectively (PubMed:23408433).</text>
</comment>
<comment type="catalytic activity">
    <reaction evidence="5">
        <text>4-aminobutanal + NAD(+) + H2O = 4-aminobutanoate + NADH + 2 H(+)</text>
        <dbReference type="Rhea" id="RHEA:19105"/>
        <dbReference type="ChEBI" id="CHEBI:15377"/>
        <dbReference type="ChEBI" id="CHEBI:15378"/>
        <dbReference type="ChEBI" id="CHEBI:57540"/>
        <dbReference type="ChEBI" id="CHEBI:57945"/>
        <dbReference type="ChEBI" id="CHEBI:58264"/>
        <dbReference type="ChEBI" id="CHEBI:59888"/>
        <dbReference type="EC" id="1.2.1.19"/>
    </reaction>
    <physiologicalReaction direction="left-to-right" evidence="5">
        <dbReference type="Rhea" id="RHEA:19106"/>
    </physiologicalReaction>
</comment>
<comment type="catalytic activity">
    <reaction evidence="5">
        <text>3-aminopropanal + NAD(+) + H2O = beta-alanine + NADH + 2 H(+)</text>
        <dbReference type="Rhea" id="RHEA:30695"/>
        <dbReference type="ChEBI" id="CHEBI:15377"/>
        <dbReference type="ChEBI" id="CHEBI:15378"/>
        <dbReference type="ChEBI" id="CHEBI:57540"/>
        <dbReference type="ChEBI" id="CHEBI:57945"/>
        <dbReference type="ChEBI" id="CHEBI:57966"/>
        <dbReference type="ChEBI" id="CHEBI:58374"/>
    </reaction>
    <physiologicalReaction direction="left-to-right" evidence="5">
        <dbReference type="Rhea" id="RHEA:30696"/>
    </physiologicalReaction>
</comment>
<comment type="catalytic activity">
    <reaction evidence="5">
        <text>4-(trimethylamino)butanal + NAD(+) + H2O = 4-(trimethylamino)butanoate + NADH + 2 H(+)</text>
        <dbReference type="Rhea" id="RHEA:17985"/>
        <dbReference type="ChEBI" id="CHEBI:15377"/>
        <dbReference type="ChEBI" id="CHEBI:15378"/>
        <dbReference type="ChEBI" id="CHEBI:16244"/>
        <dbReference type="ChEBI" id="CHEBI:18020"/>
        <dbReference type="ChEBI" id="CHEBI:57540"/>
        <dbReference type="ChEBI" id="CHEBI:57945"/>
        <dbReference type="EC" id="1.2.1.47"/>
    </reaction>
    <physiologicalReaction direction="left-to-right" evidence="5">
        <dbReference type="Rhea" id="RHEA:17986"/>
    </physiologicalReaction>
</comment>
<comment type="catalytic activity">
    <reaction evidence="5">
        <text>4-guanidinobutanal + NAD(+) + H2O = 4-guanidinobutanoate + NADH + 2 H(+)</text>
        <dbReference type="Rhea" id="RHEA:14381"/>
        <dbReference type="ChEBI" id="CHEBI:15377"/>
        <dbReference type="ChEBI" id="CHEBI:15378"/>
        <dbReference type="ChEBI" id="CHEBI:57486"/>
        <dbReference type="ChEBI" id="CHEBI:57540"/>
        <dbReference type="ChEBI" id="CHEBI:57854"/>
        <dbReference type="ChEBI" id="CHEBI:57945"/>
        <dbReference type="EC" id="1.2.1.54"/>
    </reaction>
    <physiologicalReaction direction="left-to-right" evidence="5">
        <dbReference type="Rhea" id="RHEA:14382"/>
    </physiologicalReaction>
</comment>
<comment type="biophysicochemical properties">
    <kinetics>
        <KM evidence="5">54 uM for 4-aminobutanal</KM>
        <KM evidence="5">9 uM for 3-aminopropanal</KM>
        <KM evidence="5">141 uM for 4-(trimethylamino)butanal</KM>
        <KM evidence="5">22 uM for 4-guanidinobutanal</KM>
        <KM evidence="5">89 uM for NAD(+) with 3-aminopropanal as substrate</KM>
    </kinetics>
</comment>
<comment type="pathway">
    <text evidence="7">Amine and polyamine biosynthesis; betaine biosynthesis via choline pathway; betaine from betaine aldehyde: step 1/1.</text>
</comment>
<comment type="subunit">
    <text evidence="2">Forms homodimers.</text>
</comment>
<comment type="similarity">
    <text evidence="7">Belongs to the aldehyde dehydrogenase family.</text>
</comment>
<accession>B6ECN9</accession>
<accession>A0A3Q7FS73</accession>
<keyword id="KW-0479">Metal-binding</keyword>
<keyword id="KW-0520">NAD</keyword>
<keyword id="KW-0560">Oxidoreductase</keyword>
<keyword id="KW-1185">Reference proteome</keyword>
<keyword id="KW-0915">Sodium</keyword>
<sequence length="505" mass="55952">MAIPNIRIPCRQLFIDGEWREPLKKNRLPIINPANEEIIGYIPAATEEDVDMAVKAARSALRRDDWGSTTGAQRAKYLRAIAAKVLEKKPELATLETIDNGKPWFEAASDIDDVVACFEYYADLAEALDSKKQTEVKLHLDSFKTHVLREPLGVVGLITPWNYPLLMTTWKVAPALAAGCAAILKPSELASITSLELGEICREVGLPPGALSILTGLGHEAGSPLVSHPDVDKIAFTGSGPTGVKIMTAAAQLVKPVTLELGGKSPIVVFDDIHNLDTAVEWTLFGCFWTNGQICSATSRLIIQETIAPQFLARLLEWTKNIKISDPLEEDCKLGPVISRGQYEKILKFISTAKDEGATILYGGDRPEHLKKGYYIQPTIITDVDTSMEIWKEEVFGPVLCVKTFKIEEEAIELANDTKFGLGAAILSKDLERCERFTKAFQSGIVWINCSQPCFWQPPWGGKKRSGFGRELGEWSLENYLNIKQVTQYVTPDEPWAFYKSPSKL</sequence>
<proteinExistence type="evidence at protein level"/>
<reference key="1">
    <citation type="journal article" date="2013" name="J. Biol. Chem.">
        <title>Plant ALDH10 family: identifying critical residues for substrate specificity and trapping a thiohemiacetal intermediate.</title>
        <authorList>
            <person name="Kopecny D."/>
            <person name="Koncitikova R."/>
            <person name="Tylichova M."/>
            <person name="Vigouroux A."/>
            <person name="Moskalikova H."/>
            <person name="Soural M."/>
            <person name="Sebela M."/>
            <person name="Morera S."/>
        </authorList>
    </citation>
    <scope>NUCLEOTIDE SEQUENCE [MRNA]</scope>
    <scope>FUNCTION</scope>
    <scope>CATALYTIC ACTIVITY</scope>
    <scope>BIOPHYSICOCHEMICAL PROPERTIES</scope>
</reference>
<reference key="2">
    <citation type="journal article" date="2012" name="Nature">
        <title>The tomato genome sequence provides insights into fleshy fruit evolution.</title>
        <authorList>
            <consortium name="Tomato Genome Consortium"/>
        </authorList>
    </citation>
    <scope>NUCLEOTIDE SEQUENCE [LARGE SCALE GENOMIC DNA]</scope>
    <source>
        <strain>cv. Heinz 1706</strain>
    </source>
</reference>
<name>AADH2_SOLLC</name>
<dbReference type="EC" id="1.2.1.-" evidence="5"/>
<dbReference type="EC" id="1.2.1.47" evidence="5"/>
<dbReference type="EC" id="1.2.1.19" evidence="5"/>
<dbReference type="EC" id="1.2.1.54" evidence="5"/>
<dbReference type="EMBL" id="FJ228482">
    <property type="protein sequence ID" value="ACI43573.1"/>
    <property type="molecule type" value="mRNA"/>
</dbReference>
<dbReference type="RefSeq" id="NP_001234235.2">
    <property type="nucleotide sequence ID" value="NM_001247306.2"/>
</dbReference>
<dbReference type="SMR" id="B6ECN9"/>
<dbReference type="FunCoup" id="B6ECN9">
    <property type="interactions" value="1206"/>
</dbReference>
<dbReference type="STRING" id="4081.A0A3Q7FS73"/>
<dbReference type="PaxDb" id="4081-Solyc03g113800.2.1"/>
<dbReference type="EnsemblPlants" id="Solyc03g113800.3.1">
    <property type="protein sequence ID" value="Solyc03g113800.3.1"/>
    <property type="gene ID" value="Solyc03g113800.3"/>
</dbReference>
<dbReference type="GeneID" id="100301929"/>
<dbReference type="Gramene" id="Solyc03g113800.3.1">
    <property type="protein sequence ID" value="Solyc03g113800.3.1"/>
    <property type="gene ID" value="Solyc03g113800.3"/>
</dbReference>
<dbReference type="KEGG" id="sly:100301929"/>
<dbReference type="InParanoid" id="B6ECN9"/>
<dbReference type="OMA" id="PMPIAAW"/>
<dbReference type="OrthoDB" id="310895at2759"/>
<dbReference type="BRENDA" id="1.2.1.19">
    <property type="organism ID" value="3101"/>
</dbReference>
<dbReference type="UniPathway" id="UPA00529">
    <property type="reaction ID" value="UER00386"/>
</dbReference>
<dbReference type="Proteomes" id="UP000004994">
    <property type="component" value="Chromosome 3"/>
</dbReference>
<dbReference type="ExpressionAtlas" id="B6ECN9">
    <property type="expression patterns" value="baseline and differential"/>
</dbReference>
<dbReference type="GO" id="GO:0102244">
    <property type="term" value="F:3-aminopropanal dehydrogenase (NAD+) activity"/>
    <property type="evidence" value="ECO:0007669"/>
    <property type="project" value="RHEA"/>
</dbReference>
<dbReference type="GO" id="GO:0047105">
    <property type="term" value="F:4-trimethylammoniobutyraldehyde dehydrogenase activity"/>
    <property type="evidence" value="ECO:0000314"/>
    <property type="project" value="UniProtKB"/>
</dbReference>
<dbReference type="GO" id="GO:0019145">
    <property type="term" value="F:aminobutyraldehyde dehydrogenase (NAD+) activity"/>
    <property type="evidence" value="ECO:0000314"/>
    <property type="project" value="UniProtKB"/>
</dbReference>
<dbReference type="GO" id="GO:0008802">
    <property type="term" value="F:betaine-aldehyde dehydrogenase (NAD+) activity"/>
    <property type="evidence" value="ECO:0000314"/>
    <property type="project" value="UniProtKB"/>
</dbReference>
<dbReference type="GO" id="GO:0047107">
    <property type="term" value="F:gamma-guanidinobutyraldehyde dehydrogenase (NAD+) activity"/>
    <property type="evidence" value="ECO:0000314"/>
    <property type="project" value="UniProtKB"/>
</dbReference>
<dbReference type="GO" id="GO:0042803">
    <property type="term" value="F:protein homodimerization activity"/>
    <property type="evidence" value="ECO:0000250"/>
    <property type="project" value="UniProtKB"/>
</dbReference>
<dbReference type="GO" id="GO:0031402">
    <property type="term" value="F:sodium ion binding"/>
    <property type="evidence" value="ECO:0000250"/>
    <property type="project" value="UniProtKB"/>
</dbReference>
<dbReference type="GO" id="GO:0110095">
    <property type="term" value="P:cellular detoxification of aldehyde"/>
    <property type="evidence" value="ECO:0000314"/>
    <property type="project" value="UniProtKB"/>
</dbReference>
<dbReference type="GO" id="GO:0019285">
    <property type="term" value="P:glycine betaine biosynthetic process from choline"/>
    <property type="evidence" value="ECO:0007669"/>
    <property type="project" value="UniProtKB-UniPathway"/>
</dbReference>
<dbReference type="CDD" id="cd07110">
    <property type="entry name" value="ALDH_F10_BADH"/>
    <property type="match status" value="1"/>
</dbReference>
<dbReference type="FunFam" id="3.40.309.10:FF:000012">
    <property type="entry name" value="Betaine aldehyde dehydrogenase"/>
    <property type="match status" value="1"/>
</dbReference>
<dbReference type="FunFam" id="3.40.605.10:FF:000007">
    <property type="entry name" value="NAD/NADP-dependent betaine aldehyde dehydrogenase"/>
    <property type="match status" value="1"/>
</dbReference>
<dbReference type="Gene3D" id="3.40.605.10">
    <property type="entry name" value="Aldehyde Dehydrogenase, Chain A, domain 1"/>
    <property type="match status" value="1"/>
</dbReference>
<dbReference type="Gene3D" id="3.40.309.10">
    <property type="entry name" value="Aldehyde Dehydrogenase, Chain A, domain 2"/>
    <property type="match status" value="1"/>
</dbReference>
<dbReference type="InterPro" id="IPR016161">
    <property type="entry name" value="Ald_DH/histidinol_DH"/>
</dbReference>
<dbReference type="InterPro" id="IPR016163">
    <property type="entry name" value="Ald_DH_C"/>
</dbReference>
<dbReference type="InterPro" id="IPR016160">
    <property type="entry name" value="Ald_DH_CS_CYS"/>
</dbReference>
<dbReference type="InterPro" id="IPR029510">
    <property type="entry name" value="Ald_DH_CS_GLU"/>
</dbReference>
<dbReference type="InterPro" id="IPR016162">
    <property type="entry name" value="Ald_DH_N"/>
</dbReference>
<dbReference type="InterPro" id="IPR015590">
    <property type="entry name" value="Aldehyde_DH_dom"/>
</dbReference>
<dbReference type="PANTHER" id="PTHR43860:SF8">
    <property type="entry name" value="AMINOALDEHYDE DEHYDROGENASE 2"/>
    <property type="match status" value="1"/>
</dbReference>
<dbReference type="PANTHER" id="PTHR43860">
    <property type="entry name" value="BETAINE ALDEHYDE DEHYDROGENASE"/>
    <property type="match status" value="1"/>
</dbReference>
<dbReference type="Pfam" id="PF00171">
    <property type="entry name" value="Aldedh"/>
    <property type="match status" value="1"/>
</dbReference>
<dbReference type="SUPFAM" id="SSF53720">
    <property type="entry name" value="ALDH-like"/>
    <property type="match status" value="1"/>
</dbReference>
<dbReference type="PROSITE" id="PS00070">
    <property type="entry name" value="ALDEHYDE_DEHYDR_CYS"/>
    <property type="match status" value="1"/>
</dbReference>
<dbReference type="PROSITE" id="PS00687">
    <property type="entry name" value="ALDEHYDE_DEHYDR_GLU"/>
    <property type="match status" value="1"/>
</dbReference>
<gene>
    <name evidence="6" type="primary">AMADH2</name>
    <name evidence="6" type="synonym">ALDH10A13</name>
    <name evidence="7" type="ordered locus">Solyc03g113800</name>
</gene>
<feature type="chain" id="PRO_0000454139" description="Aminoaldehyde dehydrogenase 2">
    <location>
        <begin position="1"/>
        <end position="505"/>
    </location>
</feature>
<feature type="active site" description="Proton acceptor" evidence="3">
    <location>
        <position position="260"/>
    </location>
</feature>
<feature type="active site" description="Nucleophile" evidence="4">
    <location>
        <position position="295"/>
    </location>
</feature>
<feature type="binding site" evidence="2">
    <location>
        <position position="31"/>
    </location>
    <ligand>
        <name>Na(+)</name>
        <dbReference type="ChEBI" id="CHEBI:29101"/>
    </ligand>
</feature>
<feature type="binding site" evidence="2">
    <location>
        <position position="99"/>
    </location>
    <ligand>
        <name>Na(+)</name>
        <dbReference type="ChEBI" id="CHEBI:29101"/>
    </ligand>
</feature>
<feature type="binding site" evidence="2">
    <location>
        <begin position="159"/>
        <end position="161"/>
    </location>
    <ligand>
        <name>NAD(+)</name>
        <dbReference type="ChEBI" id="CHEBI:57540"/>
    </ligand>
</feature>
<feature type="binding site" evidence="2">
    <location>
        <begin position="185"/>
        <end position="188"/>
    </location>
    <ligand>
        <name>NAD(+)</name>
        <dbReference type="ChEBI" id="CHEBI:57540"/>
    </ligand>
</feature>
<feature type="binding site" evidence="2">
    <location>
        <position position="189"/>
    </location>
    <ligand>
        <name>Na(+)</name>
        <dbReference type="ChEBI" id="CHEBI:29101"/>
    </ligand>
</feature>
<feature type="binding site" evidence="2">
    <location>
        <begin position="238"/>
        <end position="242"/>
    </location>
    <ligand>
        <name>NAD(+)</name>
        <dbReference type="ChEBI" id="CHEBI:57540"/>
    </ligand>
</feature>
<feature type="binding site" evidence="2">
    <location>
        <position position="261"/>
    </location>
    <ligand>
        <name>NAD(+)</name>
        <dbReference type="ChEBI" id="CHEBI:57540"/>
    </ligand>
</feature>
<feature type="binding site" evidence="2">
    <location>
        <position position="394"/>
    </location>
    <ligand>
        <name>NAD(+)</name>
        <dbReference type="ChEBI" id="CHEBI:57540"/>
    </ligand>
</feature>
<feature type="binding site" evidence="2">
    <location>
        <position position="460"/>
    </location>
    <ligand>
        <name>NAD(+)</name>
        <dbReference type="ChEBI" id="CHEBI:57540"/>
    </ligand>
</feature>
<feature type="site" description="Transition state stabilizer" evidence="1">
    <location>
        <position position="162"/>
    </location>
</feature>
<feature type="sequence conflict" description="In Ref. 1; ACI43573." ref="1">
    <original>I</original>
    <variation>T</variation>
    <location>
        <position position="407"/>
    </location>
</feature>
<organism>
    <name type="scientific">Solanum lycopersicum</name>
    <name type="common">Tomato</name>
    <name type="synonym">Lycopersicon esculentum</name>
    <dbReference type="NCBI Taxonomy" id="4081"/>
    <lineage>
        <taxon>Eukaryota</taxon>
        <taxon>Viridiplantae</taxon>
        <taxon>Streptophyta</taxon>
        <taxon>Embryophyta</taxon>
        <taxon>Tracheophyta</taxon>
        <taxon>Spermatophyta</taxon>
        <taxon>Magnoliopsida</taxon>
        <taxon>eudicotyledons</taxon>
        <taxon>Gunneridae</taxon>
        <taxon>Pentapetalae</taxon>
        <taxon>asterids</taxon>
        <taxon>lamiids</taxon>
        <taxon>Solanales</taxon>
        <taxon>Solanaceae</taxon>
        <taxon>Solanoideae</taxon>
        <taxon>Solaneae</taxon>
        <taxon>Solanum</taxon>
        <taxon>Solanum subgen. Lycopersicon</taxon>
    </lineage>
</organism>
<protein>
    <recommendedName>
        <fullName evidence="6">Aminoaldehyde dehydrogenase 2</fullName>
        <shortName evidence="6">SlAMADH2</shortName>
        <ecNumber evidence="5">1.2.1.-</ecNumber>
    </recommendedName>
    <alternativeName>
        <fullName evidence="7">4-trimethylammoniobutyraldehyde dehydrogenase AMADH2</fullName>
        <ecNumber evidence="5">1.2.1.47</ecNumber>
    </alternativeName>
    <alternativeName>
        <fullName evidence="7">Aminobutyraldehyde dehydrogenase AMADH2</fullName>
        <ecNumber evidence="5">1.2.1.19</ecNumber>
    </alternativeName>
    <alternativeName>
        <fullName evidence="7">Gamma-guanidinobutyraldehyde dehydrogenase AMADH2</fullName>
        <ecNumber evidence="5">1.2.1.54</ecNumber>
    </alternativeName>
</protein>